<sequence length="231" mass="25084">MEGCVSNIMICNLAYSGKLDELKERILADKSLATRTDQDSRTALHWACSAGHTEIVEFLLQLGVPVNDKDDAGWSPLHIAASAGRDEIVKALLVKGAHVNAVNQNGCTPLHYAASKNRHEIAVMLLEGGANPDAKDHYDATAMHRAAAKGNLKMVHILLFYKASTNIQDTEGNTPLHLACDEERVEEAKFLVTQGASIYIENKEEKTPLQVAKGGLGLILKRLAESEEASM</sequence>
<evidence type="ECO:0000250" key="1"/>
<evidence type="ECO:0000269" key="2">
    <source>
    </source>
</evidence>
<evidence type="ECO:0000305" key="3"/>
<evidence type="ECO:0007829" key="4">
    <source>
        <dbReference type="PDB" id="3AJI"/>
    </source>
</evidence>
<dbReference type="EMBL" id="AB022022">
    <property type="protein sequence ID" value="BAA36969.1"/>
    <property type="molecule type" value="mRNA"/>
</dbReference>
<dbReference type="EMBL" id="AK009068">
    <property type="protein sequence ID" value="BAB26053.1"/>
    <property type="molecule type" value="mRNA"/>
</dbReference>
<dbReference type="EMBL" id="AK018233">
    <property type="protein sequence ID" value="BAB31128.1"/>
    <property type="status" value="ALT_FRAME"/>
    <property type="molecule type" value="mRNA"/>
</dbReference>
<dbReference type="EMBL" id="AK136400">
    <property type="protein sequence ID" value="BAE22964.1"/>
    <property type="molecule type" value="mRNA"/>
</dbReference>
<dbReference type="EMBL" id="AL672306">
    <property type="status" value="NOT_ANNOTATED_CDS"/>
    <property type="molecule type" value="Genomic_DNA"/>
</dbReference>
<dbReference type="EMBL" id="CH466616">
    <property type="protein sequence ID" value="EDL23939.1"/>
    <property type="molecule type" value="Genomic_DNA"/>
</dbReference>
<dbReference type="EMBL" id="BC026931">
    <property type="protein sequence ID" value="AAH26931.1"/>
    <property type="molecule type" value="mRNA"/>
</dbReference>
<dbReference type="EMBL" id="BC056196">
    <property type="protein sequence ID" value="AAH56196.1"/>
    <property type="molecule type" value="mRNA"/>
</dbReference>
<dbReference type="CCDS" id="CCDS30444.1"/>
<dbReference type="RefSeq" id="NP_001157649.1">
    <property type="nucleotide sequence ID" value="NM_001164177.1"/>
</dbReference>
<dbReference type="RefSeq" id="NP_058579.2">
    <property type="nucleotide sequence ID" value="NM_016883.4"/>
</dbReference>
<dbReference type="PDB" id="2DVW">
    <property type="method" value="X-ray"/>
    <property type="resolution" value="2.30 A"/>
    <property type="chains" value="A=1-231"/>
</dbReference>
<dbReference type="PDB" id="2DWZ">
    <property type="method" value="X-ray"/>
    <property type="resolution" value="2.40 A"/>
    <property type="chains" value="A/C=1-231"/>
</dbReference>
<dbReference type="PDB" id="3AJI">
    <property type="method" value="X-ray"/>
    <property type="resolution" value="2.05 A"/>
    <property type="chains" value="A/C=1-231"/>
</dbReference>
<dbReference type="PDBsum" id="2DVW"/>
<dbReference type="PDBsum" id="2DWZ"/>
<dbReference type="PDBsum" id="3AJI"/>
<dbReference type="SMR" id="Q9Z2X2"/>
<dbReference type="BioGRID" id="207302">
    <property type="interactions" value="11"/>
</dbReference>
<dbReference type="DIP" id="DIP-29273N"/>
<dbReference type="FunCoup" id="Q9Z2X2">
    <property type="interactions" value="50"/>
</dbReference>
<dbReference type="IntAct" id="Q9Z2X2">
    <property type="interactions" value="3"/>
</dbReference>
<dbReference type="MINT" id="Q9Z2X2"/>
<dbReference type="STRING" id="10090.ENSMUSP00000033805"/>
<dbReference type="GlyGen" id="Q9Z2X2">
    <property type="glycosylation" value="1 site, 1 O-linked glycan (1 site)"/>
</dbReference>
<dbReference type="iPTMnet" id="Q9Z2X2"/>
<dbReference type="PhosphoSitePlus" id="Q9Z2X2"/>
<dbReference type="REPRODUCTION-2DPAGE" id="Q9Z2X2"/>
<dbReference type="PaxDb" id="10090-ENSMUSP00000033805"/>
<dbReference type="PeptideAtlas" id="Q9Z2X2"/>
<dbReference type="ProteomicsDB" id="291829"/>
<dbReference type="Pumba" id="Q9Z2X2"/>
<dbReference type="Antibodypedia" id="496">
    <property type="antibodies" value="447 antibodies from 33 providers"/>
</dbReference>
<dbReference type="DNASU" id="53380"/>
<dbReference type="Ensembl" id="ENSMUST00000033805.15">
    <property type="protein sequence ID" value="ENSMUSP00000033805.9"/>
    <property type="gene ID" value="ENSMUSG00000031429.15"/>
</dbReference>
<dbReference type="GeneID" id="53380"/>
<dbReference type="KEGG" id="mmu:53380"/>
<dbReference type="UCSC" id="uc009ulj.2">
    <property type="organism name" value="mouse"/>
</dbReference>
<dbReference type="AGR" id="MGI:1858898"/>
<dbReference type="CTD" id="5716"/>
<dbReference type="MGI" id="MGI:1858898">
    <property type="gene designation" value="Psmd10"/>
</dbReference>
<dbReference type="VEuPathDB" id="HostDB:ENSMUSG00000031429"/>
<dbReference type="eggNOG" id="KOG4412">
    <property type="taxonomic scope" value="Eukaryota"/>
</dbReference>
<dbReference type="GeneTree" id="ENSGT00940000153404"/>
<dbReference type="InParanoid" id="Q9Z2X2"/>
<dbReference type="OMA" id="WAVAYNR"/>
<dbReference type="OrthoDB" id="1577640at2759"/>
<dbReference type="PhylomeDB" id="Q9Z2X2"/>
<dbReference type="Reactome" id="R-MMU-9907900">
    <property type="pathway name" value="Proteasome assembly"/>
</dbReference>
<dbReference type="BioGRID-ORCS" id="53380">
    <property type="hits" value="2 hits in 78 CRISPR screens"/>
</dbReference>
<dbReference type="ChiTaRS" id="Psmd10">
    <property type="organism name" value="mouse"/>
</dbReference>
<dbReference type="EvolutionaryTrace" id="Q9Z2X2"/>
<dbReference type="PRO" id="PR:Q9Z2X2"/>
<dbReference type="Proteomes" id="UP000000589">
    <property type="component" value="Chromosome X"/>
</dbReference>
<dbReference type="RNAct" id="Q9Z2X2">
    <property type="molecule type" value="protein"/>
</dbReference>
<dbReference type="Bgee" id="ENSMUSG00000031429">
    <property type="expression patterns" value="Expressed in primary oocyte and 67 other cell types or tissues"/>
</dbReference>
<dbReference type="ExpressionAtlas" id="Q9Z2X2">
    <property type="expression patterns" value="baseline and differential"/>
</dbReference>
<dbReference type="GO" id="GO:0005929">
    <property type="term" value="C:cilium"/>
    <property type="evidence" value="ECO:0007669"/>
    <property type="project" value="Ensembl"/>
</dbReference>
<dbReference type="GO" id="GO:0005829">
    <property type="term" value="C:cytosol"/>
    <property type="evidence" value="ECO:0007669"/>
    <property type="project" value="Ensembl"/>
</dbReference>
<dbReference type="GO" id="GO:0015630">
    <property type="term" value="C:microtubule cytoskeleton"/>
    <property type="evidence" value="ECO:0007669"/>
    <property type="project" value="Ensembl"/>
</dbReference>
<dbReference type="GO" id="GO:0005634">
    <property type="term" value="C:nucleus"/>
    <property type="evidence" value="ECO:0007669"/>
    <property type="project" value="UniProtKB-SubCell"/>
</dbReference>
<dbReference type="GO" id="GO:0008540">
    <property type="term" value="C:proteasome regulatory particle, base subcomplex"/>
    <property type="evidence" value="ECO:0007669"/>
    <property type="project" value="Ensembl"/>
</dbReference>
<dbReference type="GO" id="GO:0006915">
    <property type="term" value="P:apoptotic process"/>
    <property type="evidence" value="ECO:0007669"/>
    <property type="project" value="UniProtKB-KW"/>
</dbReference>
<dbReference type="GO" id="GO:0043066">
    <property type="term" value="P:negative regulation of apoptotic process"/>
    <property type="evidence" value="ECO:0000250"/>
    <property type="project" value="UniProtKB"/>
</dbReference>
<dbReference type="GO" id="GO:0043518">
    <property type="term" value="P:negative regulation of DNA damage response, signal transduction by p53 class mediator"/>
    <property type="evidence" value="ECO:0000250"/>
    <property type="project" value="UniProtKB"/>
</dbReference>
<dbReference type="GO" id="GO:0043409">
    <property type="term" value="P:negative regulation of MAPK cascade"/>
    <property type="evidence" value="ECO:0000250"/>
    <property type="project" value="UniProtKB"/>
</dbReference>
<dbReference type="GO" id="GO:0032088">
    <property type="term" value="P:negative regulation of NF-kappaB transcription factor activity"/>
    <property type="evidence" value="ECO:0000250"/>
    <property type="project" value="UniProtKB"/>
</dbReference>
<dbReference type="GO" id="GO:0090201">
    <property type="term" value="P:negative regulation of release of cytochrome c from mitochondria"/>
    <property type="evidence" value="ECO:0000250"/>
    <property type="project" value="UniProtKB"/>
</dbReference>
<dbReference type="GO" id="GO:0000122">
    <property type="term" value="P:negative regulation of transcription by RNA polymerase II"/>
    <property type="evidence" value="ECO:0000250"/>
    <property type="project" value="UniProtKB"/>
</dbReference>
<dbReference type="GO" id="GO:0030307">
    <property type="term" value="P:positive regulation of cell growth"/>
    <property type="evidence" value="ECO:0000250"/>
    <property type="project" value="UniProtKB"/>
</dbReference>
<dbReference type="GO" id="GO:0045737">
    <property type="term" value="P:positive regulation of cyclin-dependent protein serine/threonine kinase activity"/>
    <property type="evidence" value="ECO:0000250"/>
    <property type="project" value="UniProtKB"/>
</dbReference>
<dbReference type="GO" id="GO:0032436">
    <property type="term" value="P:positive regulation of proteasomal ubiquitin-dependent protein catabolic process"/>
    <property type="evidence" value="ECO:0000250"/>
    <property type="project" value="UniProtKB"/>
</dbReference>
<dbReference type="GO" id="GO:0031398">
    <property type="term" value="P:positive regulation of protein ubiquitination"/>
    <property type="evidence" value="ECO:0000250"/>
    <property type="project" value="UniProtKB"/>
</dbReference>
<dbReference type="GO" id="GO:0070682">
    <property type="term" value="P:proteasome regulatory particle assembly"/>
    <property type="evidence" value="ECO:0000250"/>
    <property type="project" value="UniProtKB"/>
</dbReference>
<dbReference type="FunFam" id="1.25.40.20:FF:000149">
    <property type="entry name" value="26S proteasome non-ATPase regulatory subunit 10 isoform X1"/>
    <property type="match status" value="1"/>
</dbReference>
<dbReference type="Gene3D" id="1.25.40.20">
    <property type="entry name" value="Ankyrin repeat-containing domain"/>
    <property type="match status" value="1"/>
</dbReference>
<dbReference type="IDEAL" id="IID50037"/>
<dbReference type="InterPro" id="IPR051637">
    <property type="entry name" value="Ank_repeat_dom-contain_49"/>
</dbReference>
<dbReference type="InterPro" id="IPR002110">
    <property type="entry name" value="Ankyrin_rpt"/>
</dbReference>
<dbReference type="InterPro" id="IPR036770">
    <property type="entry name" value="Ankyrin_rpt-contain_sf"/>
</dbReference>
<dbReference type="PANTHER" id="PTHR24180">
    <property type="entry name" value="CYCLIN-DEPENDENT KINASE INHIBITOR 2C-RELATED"/>
    <property type="match status" value="1"/>
</dbReference>
<dbReference type="PANTHER" id="PTHR24180:SF39">
    <property type="entry name" value="PROTEASOME 26S SUBUNIT, NON-ATPASE 10"/>
    <property type="match status" value="1"/>
</dbReference>
<dbReference type="Pfam" id="PF00023">
    <property type="entry name" value="Ank"/>
    <property type="match status" value="1"/>
</dbReference>
<dbReference type="Pfam" id="PF12796">
    <property type="entry name" value="Ank_2"/>
    <property type="match status" value="2"/>
</dbReference>
<dbReference type="PRINTS" id="PR01415">
    <property type="entry name" value="ANKYRIN"/>
</dbReference>
<dbReference type="SMART" id="SM00248">
    <property type="entry name" value="ANK"/>
    <property type="match status" value="5"/>
</dbReference>
<dbReference type="SUPFAM" id="SSF48403">
    <property type="entry name" value="Ankyrin repeat"/>
    <property type="match status" value="1"/>
</dbReference>
<dbReference type="PROSITE" id="PS50297">
    <property type="entry name" value="ANK_REP_REGION"/>
    <property type="match status" value="1"/>
</dbReference>
<dbReference type="PROSITE" id="PS50088">
    <property type="entry name" value="ANK_REPEAT"/>
    <property type="match status" value="5"/>
</dbReference>
<feature type="chain" id="PRO_0000067046" description="26S proteasome non-ATPase regulatory subunit 10">
    <location>
        <begin position="1"/>
        <end position="231"/>
    </location>
</feature>
<feature type="repeat" description="ANK 1">
    <location>
        <begin position="3"/>
        <end position="36"/>
    </location>
</feature>
<feature type="repeat" description="ANK 2">
    <location>
        <begin position="37"/>
        <end position="69"/>
    </location>
</feature>
<feature type="repeat" description="ANK 3">
    <location>
        <begin position="70"/>
        <end position="102"/>
    </location>
</feature>
<feature type="repeat" description="ANK 4">
    <location>
        <begin position="103"/>
        <end position="135"/>
    </location>
</feature>
<feature type="repeat" description="ANK 5">
    <location>
        <begin position="136"/>
        <end position="168"/>
    </location>
</feature>
<feature type="repeat" description="ANK 6">
    <location>
        <begin position="169"/>
        <end position="201"/>
    </location>
</feature>
<feature type="repeat" description="ANK 7">
    <location>
        <begin position="202"/>
        <end position="226"/>
    </location>
</feature>
<feature type="sequence conflict" description="In Ref. 1; BAA36969." evidence="3" ref="1">
    <original>A</original>
    <variation>S</variation>
    <location>
        <position position="101"/>
    </location>
</feature>
<feature type="sequence conflict" description="In Ref. 1; BAA36969." evidence="3" ref="1">
    <original>A</original>
    <variation>S</variation>
    <location>
        <position position="122"/>
    </location>
</feature>
<feature type="sequence conflict" description="In Ref. 2; BAB26053." evidence="3" ref="2">
    <original>S</original>
    <variation>G</variation>
    <location>
        <position position="226"/>
    </location>
</feature>
<feature type="strand" evidence="4">
    <location>
        <begin position="6"/>
        <end position="8"/>
    </location>
</feature>
<feature type="helix" evidence="4">
    <location>
        <begin position="9"/>
        <end position="16"/>
    </location>
</feature>
<feature type="helix" evidence="4">
    <location>
        <begin position="19"/>
        <end position="28"/>
    </location>
</feature>
<feature type="helix" evidence="4">
    <location>
        <begin position="30"/>
        <end position="34"/>
    </location>
</feature>
<feature type="helix" evidence="4">
    <location>
        <begin position="43"/>
        <end position="50"/>
    </location>
</feature>
<feature type="helix" evidence="4">
    <location>
        <begin position="53"/>
        <end position="61"/>
    </location>
</feature>
<feature type="helix" evidence="4">
    <location>
        <begin position="76"/>
        <end position="83"/>
    </location>
</feature>
<feature type="helix" evidence="4">
    <location>
        <begin position="86"/>
        <end position="94"/>
    </location>
</feature>
<feature type="helix" evidence="4">
    <location>
        <begin position="109"/>
        <end position="115"/>
    </location>
</feature>
<feature type="helix" evidence="4">
    <location>
        <begin position="119"/>
        <end position="127"/>
    </location>
</feature>
<feature type="helix" evidence="4">
    <location>
        <begin position="142"/>
        <end position="149"/>
    </location>
</feature>
<feature type="helix" evidence="4">
    <location>
        <begin position="152"/>
        <end position="160"/>
    </location>
</feature>
<feature type="helix" evidence="4">
    <location>
        <begin position="175"/>
        <end position="181"/>
    </location>
</feature>
<feature type="helix" evidence="4">
    <location>
        <begin position="185"/>
        <end position="193"/>
    </location>
</feature>
<feature type="helix" evidence="4">
    <location>
        <begin position="208"/>
        <end position="211"/>
    </location>
</feature>
<feature type="helix" evidence="4">
    <location>
        <begin position="214"/>
        <end position="229"/>
    </location>
</feature>
<keyword id="KW-0002">3D-structure</keyword>
<keyword id="KW-0040">ANK repeat</keyword>
<keyword id="KW-0053">Apoptosis</keyword>
<keyword id="KW-0143">Chaperone</keyword>
<keyword id="KW-0963">Cytoplasm</keyword>
<keyword id="KW-0539">Nucleus</keyword>
<keyword id="KW-1185">Reference proteome</keyword>
<keyword id="KW-0677">Repeat</keyword>
<gene>
    <name type="primary">Psmd10</name>
</gene>
<reference key="1">
    <citation type="submission" date="1999-01" db="EMBL/GenBank/DDBJ databases">
        <title>Cloning of mouse gankyrin containing ankyrin repeats.</title>
        <authorList>
            <person name="Higashitsuji H."/>
            <person name="Fujita J."/>
        </authorList>
    </citation>
    <scope>NUCLEOTIDE SEQUENCE [MRNA]</scope>
    <source>
        <tissue>Placenta</tissue>
    </source>
</reference>
<reference key="2">
    <citation type="journal article" date="2005" name="Science">
        <title>The transcriptional landscape of the mammalian genome.</title>
        <authorList>
            <person name="Carninci P."/>
            <person name="Kasukawa T."/>
            <person name="Katayama S."/>
            <person name="Gough J."/>
            <person name="Frith M.C."/>
            <person name="Maeda N."/>
            <person name="Oyama R."/>
            <person name="Ravasi T."/>
            <person name="Lenhard B."/>
            <person name="Wells C."/>
            <person name="Kodzius R."/>
            <person name="Shimokawa K."/>
            <person name="Bajic V.B."/>
            <person name="Brenner S.E."/>
            <person name="Batalov S."/>
            <person name="Forrest A.R."/>
            <person name="Zavolan M."/>
            <person name="Davis M.J."/>
            <person name="Wilming L.G."/>
            <person name="Aidinis V."/>
            <person name="Allen J.E."/>
            <person name="Ambesi-Impiombato A."/>
            <person name="Apweiler R."/>
            <person name="Aturaliya R.N."/>
            <person name="Bailey T.L."/>
            <person name="Bansal M."/>
            <person name="Baxter L."/>
            <person name="Beisel K.W."/>
            <person name="Bersano T."/>
            <person name="Bono H."/>
            <person name="Chalk A.M."/>
            <person name="Chiu K.P."/>
            <person name="Choudhary V."/>
            <person name="Christoffels A."/>
            <person name="Clutterbuck D.R."/>
            <person name="Crowe M.L."/>
            <person name="Dalla E."/>
            <person name="Dalrymple B.P."/>
            <person name="de Bono B."/>
            <person name="Della Gatta G."/>
            <person name="di Bernardo D."/>
            <person name="Down T."/>
            <person name="Engstrom P."/>
            <person name="Fagiolini M."/>
            <person name="Faulkner G."/>
            <person name="Fletcher C.F."/>
            <person name="Fukushima T."/>
            <person name="Furuno M."/>
            <person name="Futaki S."/>
            <person name="Gariboldi M."/>
            <person name="Georgii-Hemming P."/>
            <person name="Gingeras T.R."/>
            <person name="Gojobori T."/>
            <person name="Green R.E."/>
            <person name="Gustincich S."/>
            <person name="Harbers M."/>
            <person name="Hayashi Y."/>
            <person name="Hensch T.K."/>
            <person name="Hirokawa N."/>
            <person name="Hill D."/>
            <person name="Huminiecki L."/>
            <person name="Iacono M."/>
            <person name="Ikeo K."/>
            <person name="Iwama A."/>
            <person name="Ishikawa T."/>
            <person name="Jakt M."/>
            <person name="Kanapin A."/>
            <person name="Katoh M."/>
            <person name="Kawasawa Y."/>
            <person name="Kelso J."/>
            <person name="Kitamura H."/>
            <person name="Kitano H."/>
            <person name="Kollias G."/>
            <person name="Krishnan S.P."/>
            <person name="Kruger A."/>
            <person name="Kummerfeld S.K."/>
            <person name="Kurochkin I.V."/>
            <person name="Lareau L.F."/>
            <person name="Lazarevic D."/>
            <person name="Lipovich L."/>
            <person name="Liu J."/>
            <person name="Liuni S."/>
            <person name="McWilliam S."/>
            <person name="Madan Babu M."/>
            <person name="Madera M."/>
            <person name="Marchionni L."/>
            <person name="Matsuda H."/>
            <person name="Matsuzawa S."/>
            <person name="Miki H."/>
            <person name="Mignone F."/>
            <person name="Miyake S."/>
            <person name="Morris K."/>
            <person name="Mottagui-Tabar S."/>
            <person name="Mulder N."/>
            <person name="Nakano N."/>
            <person name="Nakauchi H."/>
            <person name="Ng P."/>
            <person name="Nilsson R."/>
            <person name="Nishiguchi S."/>
            <person name="Nishikawa S."/>
            <person name="Nori F."/>
            <person name="Ohara O."/>
            <person name="Okazaki Y."/>
            <person name="Orlando V."/>
            <person name="Pang K.C."/>
            <person name="Pavan W.J."/>
            <person name="Pavesi G."/>
            <person name="Pesole G."/>
            <person name="Petrovsky N."/>
            <person name="Piazza S."/>
            <person name="Reed J."/>
            <person name="Reid J.F."/>
            <person name="Ring B.Z."/>
            <person name="Ringwald M."/>
            <person name="Rost B."/>
            <person name="Ruan Y."/>
            <person name="Salzberg S.L."/>
            <person name="Sandelin A."/>
            <person name="Schneider C."/>
            <person name="Schoenbach C."/>
            <person name="Sekiguchi K."/>
            <person name="Semple C.A."/>
            <person name="Seno S."/>
            <person name="Sessa L."/>
            <person name="Sheng Y."/>
            <person name="Shibata Y."/>
            <person name="Shimada H."/>
            <person name="Shimada K."/>
            <person name="Silva D."/>
            <person name="Sinclair B."/>
            <person name="Sperling S."/>
            <person name="Stupka E."/>
            <person name="Sugiura K."/>
            <person name="Sultana R."/>
            <person name="Takenaka Y."/>
            <person name="Taki K."/>
            <person name="Tammoja K."/>
            <person name="Tan S.L."/>
            <person name="Tang S."/>
            <person name="Taylor M.S."/>
            <person name="Tegner J."/>
            <person name="Teichmann S.A."/>
            <person name="Ueda H.R."/>
            <person name="van Nimwegen E."/>
            <person name="Verardo R."/>
            <person name="Wei C.L."/>
            <person name="Yagi K."/>
            <person name="Yamanishi H."/>
            <person name="Zabarovsky E."/>
            <person name="Zhu S."/>
            <person name="Zimmer A."/>
            <person name="Hide W."/>
            <person name="Bult C."/>
            <person name="Grimmond S.M."/>
            <person name="Teasdale R.D."/>
            <person name="Liu E.T."/>
            <person name="Brusic V."/>
            <person name="Quackenbush J."/>
            <person name="Wahlestedt C."/>
            <person name="Mattick J.S."/>
            <person name="Hume D.A."/>
            <person name="Kai C."/>
            <person name="Sasaki D."/>
            <person name="Tomaru Y."/>
            <person name="Fukuda S."/>
            <person name="Kanamori-Katayama M."/>
            <person name="Suzuki M."/>
            <person name="Aoki J."/>
            <person name="Arakawa T."/>
            <person name="Iida J."/>
            <person name="Imamura K."/>
            <person name="Itoh M."/>
            <person name="Kato T."/>
            <person name="Kawaji H."/>
            <person name="Kawagashira N."/>
            <person name="Kawashima T."/>
            <person name="Kojima M."/>
            <person name="Kondo S."/>
            <person name="Konno H."/>
            <person name="Nakano K."/>
            <person name="Ninomiya N."/>
            <person name="Nishio T."/>
            <person name="Okada M."/>
            <person name="Plessy C."/>
            <person name="Shibata K."/>
            <person name="Shiraki T."/>
            <person name="Suzuki S."/>
            <person name="Tagami M."/>
            <person name="Waki K."/>
            <person name="Watahiki A."/>
            <person name="Okamura-Oho Y."/>
            <person name="Suzuki H."/>
            <person name="Kawai J."/>
            <person name="Hayashizaki Y."/>
        </authorList>
    </citation>
    <scope>NUCLEOTIDE SEQUENCE [LARGE SCALE MRNA]</scope>
    <source>
        <strain>C57BL/6J</strain>
        <tissue>Embryo</tissue>
        <tissue>Medulla oblongata</tissue>
        <tissue>Tongue</tissue>
    </source>
</reference>
<reference key="3">
    <citation type="journal article" date="2009" name="PLoS Biol.">
        <title>Lineage-specific biology revealed by a finished genome assembly of the mouse.</title>
        <authorList>
            <person name="Church D.M."/>
            <person name="Goodstadt L."/>
            <person name="Hillier L.W."/>
            <person name="Zody M.C."/>
            <person name="Goldstein S."/>
            <person name="She X."/>
            <person name="Bult C.J."/>
            <person name="Agarwala R."/>
            <person name="Cherry J.L."/>
            <person name="DiCuccio M."/>
            <person name="Hlavina W."/>
            <person name="Kapustin Y."/>
            <person name="Meric P."/>
            <person name="Maglott D."/>
            <person name="Birtle Z."/>
            <person name="Marques A.C."/>
            <person name="Graves T."/>
            <person name="Zhou S."/>
            <person name="Teague B."/>
            <person name="Potamousis K."/>
            <person name="Churas C."/>
            <person name="Place M."/>
            <person name="Herschleb J."/>
            <person name="Runnheim R."/>
            <person name="Forrest D."/>
            <person name="Amos-Landgraf J."/>
            <person name="Schwartz D.C."/>
            <person name="Cheng Z."/>
            <person name="Lindblad-Toh K."/>
            <person name="Eichler E.E."/>
            <person name="Ponting C.P."/>
        </authorList>
    </citation>
    <scope>NUCLEOTIDE SEQUENCE [LARGE SCALE GENOMIC DNA]</scope>
    <source>
        <strain>C57BL/6J</strain>
    </source>
</reference>
<reference key="4">
    <citation type="submission" date="2005-07" db="EMBL/GenBank/DDBJ databases">
        <authorList>
            <person name="Mural R.J."/>
            <person name="Adams M.D."/>
            <person name="Myers E.W."/>
            <person name="Smith H.O."/>
            <person name="Venter J.C."/>
        </authorList>
    </citation>
    <scope>NUCLEOTIDE SEQUENCE [LARGE SCALE GENOMIC DNA]</scope>
</reference>
<reference key="5">
    <citation type="journal article" date="2004" name="Genome Res.">
        <title>The status, quality, and expansion of the NIH full-length cDNA project: the Mammalian Gene Collection (MGC).</title>
        <authorList>
            <consortium name="The MGC Project Team"/>
        </authorList>
    </citation>
    <scope>NUCLEOTIDE SEQUENCE [LARGE SCALE MRNA]</scope>
    <source>
        <strain>C57BL/6J</strain>
        <tissue>Embryo</tissue>
        <tissue>Mammary tumor</tissue>
    </source>
</reference>
<reference key="6">
    <citation type="journal article" date="2010" name="Cell">
        <title>A tissue-specific atlas of mouse protein phosphorylation and expression.</title>
        <authorList>
            <person name="Huttlin E.L."/>
            <person name="Jedrychowski M.P."/>
            <person name="Elias J.E."/>
            <person name="Goswami T."/>
            <person name="Rad R."/>
            <person name="Beausoleil S.A."/>
            <person name="Villen J."/>
            <person name="Haas W."/>
            <person name="Sowa M.E."/>
            <person name="Gygi S.P."/>
        </authorList>
    </citation>
    <scope>IDENTIFICATION BY MASS SPECTROMETRY [LARGE SCALE ANALYSIS]</scope>
    <source>
        <tissue>Brain</tissue>
        <tissue>Brown adipose tissue</tissue>
        <tissue>Kidney</tissue>
        <tissue>Liver</tissue>
        <tissue>Lung</tissue>
        <tissue>Spleen</tissue>
        <tissue>Testis</tissue>
    </source>
</reference>
<reference key="7">
    <citation type="journal article" date="2010" name="J. Clin. Invest.">
        <title>Gankyrin plays an essential role in Ras-induced tumorigenesis through regulation of the RhoA/ROCK pathway in mammalian cells.</title>
        <authorList>
            <person name="Man J.H."/>
            <person name="Liang B."/>
            <person name="Gu Y.X."/>
            <person name="Zhou T."/>
            <person name="Li A.L."/>
            <person name="Li T."/>
            <person name="Jin B.F."/>
            <person name="Bai B."/>
            <person name="Zhang H.Y."/>
            <person name="Zhang W.N."/>
            <person name="Li W.H."/>
            <person name="Gong W.L."/>
            <person name="Li H.Y."/>
            <person name="Zhang X.M."/>
        </authorList>
    </citation>
    <scope>FUNCTION IN AKT ACTIVATION</scope>
    <scope>INDUCTION BY HRAS</scope>
</reference>
<reference key="8">
    <citation type="journal article" date="2007" name="Structure">
        <title>Structure of the oncoprotein gankyrin in complex with S6 ATPase of the 26S proteasome.</title>
        <authorList>
            <person name="Nakamura Y."/>
            <person name="Nakano K."/>
            <person name="Umehara T."/>
            <person name="Kimura M."/>
            <person name="Hayashizaki Y."/>
            <person name="Tanaka A."/>
            <person name="Horikoshi M."/>
            <person name="Padmanabhan B."/>
            <person name="Yokoyama S."/>
        </authorList>
    </citation>
    <scope>X-RAY CRYSTALLOGRAPHY (2.3 ANGSTROMS) IN COMPLEX WITH HUMAN AND RAT PSMC4</scope>
    <scope>DOMAINS ANKYRIN REPEATS</scope>
</reference>
<protein>
    <recommendedName>
        <fullName>26S proteasome non-ATPase regulatory subunit 10</fullName>
    </recommendedName>
    <alternativeName>
        <fullName>26S proteasome regulatory subunit p28</fullName>
    </alternativeName>
    <alternativeName>
        <fullName>Gankyrin</fullName>
    </alternativeName>
</protein>
<organism>
    <name type="scientific">Mus musculus</name>
    <name type="common">Mouse</name>
    <dbReference type="NCBI Taxonomy" id="10090"/>
    <lineage>
        <taxon>Eukaryota</taxon>
        <taxon>Metazoa</taxon>
        <taxon>Chordata</taxon>
        <taxon>Craniata</taxon>
        <taxon>Vertebrata</taxon>
        <taxon>Euteleostomi</taxon>
        <taxon>Mammalia</taxon>
        <taxon>Eutheria</taxon>
        <taxon>Euarchontoglires</taxon>
        <taxon>Glires</taxon>
        <taxon>Rodentia</taxon>
        <taxon>Myomorpha</taxon>
        <taxon>Muroidea</taxon>
        <taxon>Muridae</taxon>
        <taxon>Murinae</taxon>
        <taxon>Mus</taxon>
        <taxon>Mus</taxon>
    </lineage>
</organism>
<proteinExistence type="evidence at protein level"/>
<comment type="function">
    <text evidence="1 2">Acts as a chaperone during the assembly of the 26S proteasome, specifically of the PA700/19S regulatory complex (RC). In the initial step of the base subcomplex assembly is part of an intermediate PSMD10:PSMC4:PSMC5:PAAF1 module which probably assembles with a PSMD5:PSMC2:PSMC1:PSMD2 module (By similarity). Independently of the proteasome, regulates EGF-induced AKT activation through inhibition of the RHOA/ROCK/PTEN pathway, leading to prolonged AKT activation. Plays an important role in RAS-induced tumorigenesis.</text>
</comment>
<comment type="function">
    <text evidence="1">Acts as an oncoprotein by being involved in negative regulation of tumor suppressors RB1 and p53/TP53. Overexpression is leading to phosphorylation of RB1 and proteasomal degradation of RB1. Regulates CDK4-mediated phosphorylation of RB1 by competing with CDKN2A for binding with CDK4. Facilitates binding of MDM2 to p53/TP53 and the mono- and polyubiquitination of p53/TP53 by MDM2 suggesting a function in targeting the TP53:MDM2 complex to the 26S proteasome. Involved in p53-independent apoptosis. Involved in regulation of NF-kappa-B by retaining it in the cytoplasm. Binds to the NF-kappa-B component RELA and accelerates its XPO1/CRM1-mediated nuclear export (By similarity).</text>
</comment>
<comment type="subunit">
    <text evidence="1">Part of transient complex containing PSMD10, PSMC4, PSMC5 and PAAF1 formed during the assembly of the 26S proteasome. Stays associated throughout the assembly of the PA700/19S RC and is released upon association with the 20S core. Interacts with PSMC4. Interacts with RB1. Interacts with CDK4. Interacts with MDM2. Interacts with RELA. Associates with a CDK4:CCND2 serine/threonine kinase complex (By similarity). Interacts with ARHGDIA and increases the interaction between ARHGDIA and RHOA, hence promotes ARHGDIA inactivation of RHOA and ROCK (By similarity).</text>
</comment>
<comment type="interaction">
    <interactant intactId="EBI-8377084">
        <id>Q9Z2X2</id>
    </interactant>
    <interactant intactId="EBI-743997">
        <id>P43686</id>
        <label>PSMC4</label>
    </interactant>
    <organismsDiffer>true</organismsDiffer>
    <experiments>4</experiments>
</comment>
<comment type="interaction">
    <interactant intactId="EBI-8377084">
        <id>Q9Z2X2</id>
    </interactant>
    <interactant intactId="EBI-491274">
        <id>P06400</id>
        <label>RB1</label>
    </interactant>
    <organismsDiffer>true</organismsDiffer>
    <experiments>3</experiments>
</comment>
<comment type="subcellular location">
    <subcellularLocation>
        <location evidence="1">Cytoplasm</location>
    </subcellularLocation>
    <subcellularLocation>
        <location evidence="1">Nucleus</location>
    </subcellularLocation>
</comment>
<comment type="induction">
    <text evidence="2">Up-regulated by activated HRAS.</text>
</comment>
<comment type="sequence caution" evidence="3">
    <conflict type="frameshift">
        <sequence resource="EMBL-CDS" id="BAB31128"/>
    </conflict>
</comment>
<accession>Q9Z2X2</accession>
<accession>Q8R0G2</accession>
<accession>Q9D383</accession>
<accession>Q9D7N8</accession>
<name>PSD10_MOUSE</name>